<reference key="1">
    <citation type="submission" date="2007-02" db="EMBL/GenBank/DDBJ databases">
        <title>Complete sequence of chromosome 1 of Rhodobacter sphaeroides ATCC 17029.</title>
        <authorList>
            <person name="Copeland A."/>
            <person name="Lucas S."/>
            <person name="Lapidus A."/>
            <person name="Barry K."/>
            <person name="Detter J.C."/>
            <person name="Glavina del Rio T."/>
            <person name="Hammon N."/>
            <person name="Israni S."/>
            <person name="Dalin E."/>
            <person name="Tice H."/>
            <person name="Pitluck S."/>
            <person name="Kiss H."/>
            <person name="Brettin T."/>
            <person name="Bruce D."/>
            <person name="Han C."/>
            <person name="Tapia R."/>
            <person name="Gilna P."/>
            <person name="Schmutz J."/>
            <person name="Larimer F."/>
            <person name="Land M."/>
            <person name="Hauser L."/>
            <person name="Kyrpides N."/>
            <person name="Mikhailova N."/>
            <person name="Richardson P."/>
            <person name="Mackenzie C."/>
            <person name="Choudhary M."/>
            <person name="Donohue T.J."/>
            <person name="Kaplan S."/>
        </authorList>
    </citation>
    <scope>NUCLEOTIDE SEQUENCE [LARGE SCALE GENOMIC DNA]</scope>
    <source>
        <strain>ATCC 17029 / ATH 2.4.9</strain>
    </source>
</reference>
<protein>
    <recommendedName>
        <fullName>Transcriptional regulator MraZ</fullName>
    </recommendedName>
</protein>
<dbReference type="EMBL" id="CP000577">
    <property type="protein sequence ID" value="ABN75882.1"/>
    <property type="molecule type" value="Genomic_DNA"/>
</dbReference>
<dbReference type="RefSeq" id="WP_011337234.1">
    <property type="nucleotide sequence ID" value="NC_009049.1"/>
</dbReference>
<dbReference type="SMR" id="A3PHR6"/>
<dbReference type="GeneID" id="3719529"/>
<dbReference type="KEGG" id="rsh:Rsph17029_0771"/>
<dbReference type="HOGENOM" id="CLU_107907_1_0_5"/>
<dbReference type="GO" id="GO:0005737">
    <property type="term" value="C:cytoplasm"/>
    <property type="evidence" value="ECO:0007669"/>
    <property type="project" value="UniProtKB-UniRule"/>
</dbReference>
<dbReference type="GO" id="GO:0009295">
    <property type="term" value="C:nucleoid"/>
    <property type="evidence" value="ECO:0007669"/>
    <property type="project" value="UniProtKB-SubCell"/>
</dbReference>
<dbReference type="GO" id="GO:0003700">
    <property type="term" value="F:DNA-binding transcription factor activity"/>
    <property type="evidence" value="ECO:0007669"/>
    <property type="project" value="UniProtKB-UniRule"/>
</dbReference>
<dbReference type="GO" id="GO:0000976">
    <property type="term" value="F:transcription cis-regulatory region binding"/>
    <property type="evidence" value="ECO:0007669"/>
    <property type="project" value="TreeGrafter"/>
</dbReference>
<dbReference type="GO" id="GO:2000143">
    <property type="term" value="P:negative regulation of DNA-templated transcription initiation"/>
    <property type="evidence" value="ECO:0007669"/>
    <property type="project" value="TreeGrafter"/>
</dbReference>
<dbReference type="CDD" id="cd16321">
    <property type="entry name" value="MraZ_C"/>
    <property type="match status" value="1"/>
</dbReference>
<dbReference type="CDD" id="cd16320">
    <property type="entry name" value="MraZ_N"/>
    <property type="match status" value="1"/>
</dbReference>
<dbReference type="Gene3D" id="3.40.1550.20">
    <property type="entry name" value="Transcriptional regulator MraZ domain"/>
    <property type="match status" value="1"/>
</dbReference>
<dbReference type="HAMAP" id="MF_01008">
    <property type="entry name" value="MraZ"/>
    <property type="match status" value="1"/>
</dbReference>
<dbReference type="InterPro" id="IPR003444">
    <property type="entry name" value="MraZ"/>
</dbReference>
<dbReference type="InterPro" id="IPR035644">
    <property type="entry name" value="MraZ_C"/>
</dbReference>
<dbReference type="InterPro" id="IPR020603">
    <property type="entry name" value="MraZ_dom"/>
</dbReference>
<dbReference type="InterPro" id="IPR035642">
    <property type="entry name" value="MraZ_N"/>
</dbReference>
<dbReference type="InterPro" id="IPR038619">
    <property type="entry name" value="MraZ_sf"/>
</dbReference>
<dbReference type="InterPro" id="IPR007159">
    <property type="entry name" value="SpoVT-AbrB_dom"/>
</dbReference>
<dbReference type="InterPro" id="IPR037914">
    <property type="entry name" value="SpoVT-AbrB_sf"/>
</dbReference>
<dbReference type="NCBIfam" id="NF001476">
    <property type="entry name" value="PRK00326.2-2"/>
    <property type="match status" value="1"/>
</dbReference>
<dbReference type="PANTHER" id="PTHR34701">
    <property type="entry name" value="TRANSCRIPTIONAL REGULATOR MRAZ"/>
    <property type="match status" value="1"/>
</dbReference>
<dbReference type="PANTHER" id="PTHR34701:SF1">
    <property type="entry name" value="TRANSCRIPTIONAL REGULATOR MRAZ"/>
    <property type="match status" value="1"/>
</dbReference>
<dbReference type="Pfam" id="PF02381">
    <property type="entry name" value="MraZ"/>
    <property type="match status" value="1"/>
</dbReference>
<dbReference type="SUPFAM" id="SSF89447">
    <property type="entry name" value="AbrB/MazE/MraZ-like"/>
    <property type="match status" value="1"/>
</dbReference>
<dbReference type="PROSITE" id="PS51740">
    <property type="entry name" value="SPOVT_ABRB"/>
    <property type="match status" value="2"/>
</dbReference>
<keyword id="KW-0963">Cytoplasm</keyword>
<keyword id="KW-0238">DNA-binding</keyword>
<keyword id="KW-0677">Repeat</keyword>
<keyword id="KW-0804">Transcription</keyword>
<keyword id="KW-0805">Transcription regulation</keyword>
<gene>
    <name evidence="1" type="primary">mraZ</name>
    <name type="ordered locus">Rsph17029_0771</name>
</gene>
<accession>A3PHR6</accession>
<evidence type="ECO:0000255" key="1">
    <source>
        <dbReference type="HAMAP-Rule" id="MF_01008"/>
    </source>
</evidence>
<evidence type="ECO:0000255" key="2">
    <source>
        <dbReference type="PROSITE-ProRule" id="PRU01076"/>
    </source>
</evidence>
<proteinExistence type="inferred from homology"/>
<feature type="chain" id="PRO_1000062917" description="Transcriptional regulator MraZ">
    <location>
        <begin position="1"/>
        <end position="168"/>
    </location>
</feature>
<feature type="domain" description="SpoVT-AbrB 1" evidence="2">
    <location>
        <begin position="8"/>
        <end position="51"/>
    </location>
</feature>
<feature type="domain" description="SpoVT-AbrB 2" evidence="2">
    <location>
        <begin position="90"/>
        <end position="140"/>
    </location>
</feature>
<sequence length="168" mass="18733">MAEAFRGEYNQKVDAKARVSIPAPFRRVIEAGDPKFSGGRSSFVLVYGGDRSYVECYTISEMERIEERIRSLPMGTPKRRYLERNMITLALNMELDEDGRIVLPPKGREKLGISPDELKGGTEATFAGTLNKFQIWKADTYAAELAAEEEVLLPPGADMLSLLEETGL</sequence>
<name>MRAZ_CERS1</name>
<organism>
    <name type="scientific">Cereibacter sphaeroides (strain ATCC 17029 / ATH 2.4.9)</name>
    <name type="common">Rhodobacter sphaeroides</name>
    <dbReference type="NCBI Taxonomy" id="349101"/>
    <lineage>
        <taxon>Bacteria</taxon>
        <taxon>Pseudomonadati</taxon>
        <taxon>Pseudomonadota</taxon>
        <taxon>Alphaproteobacteria</taxon>
        <taxon>Rhodobacterales</taxon>
        <taxon>Paracoccaceae</taxon>
        <taxon>Cereibacter</taxon>
    </lineage>
</organism>
<comment type="subunit">
    <text evidence="1">Forms oligomers.</text>
</comment>
<comment type="subcellular location">
    <subcellularLocation>
        <location evidence="1">Cytoplasm</location>
        <location evidence="1">Nucleoid</location>
    </subcellularLocation>
</comment>
<comment type="similarity">
    <text evidence="1">Belongs to the MraZ family.</text>
</comment>